<accession>P23162</accession>
<name>3608L_ASFB7</name>
<proteinExistence type="evidence at transcript level"/>
<reference key="1">
    <citation type="journal article" date="1990" name="J. Virol.">
        <title>Multigene families in African swine fever virus: family 360.</title>
        <authorList>
            <person name="Gonzalez A."/>
            <person name="Calvo V."/>
            <person name="Almazan F."/>
            <person name="Almendral J.M."/>
            <person name="Ramirez J.C."/>
            <person name="de la Vega I."/>
            <person name="Blasco R."/>
            <person name="Vinuela E."/>
        </authorList>
    </citation>
    <scope>NUCLEOTIDE SEQUENCE [GENOMIC DNA]</scope>
</reference>
<reference key="2">
    <citation type="journal article" date="1995" name="Virology">
        <title>Analysis of the complete nucleotide sequence of African swine fever virus.</title>
        <authorList>
            <person name="Yanez R.J."/>
            <person name="Rodriguez J.M."/>
            <person name="Nogal M.L."/>
            <person name="Yuste L."/>
            <person name="Enriquez C."/>
            <person name="Rodriguez J.F."/>
            <person name="Vinuela E."/>
        </authorList>
    </citation>
    <scope>NUCLEOTIDE SEQUENCE [LARGE SCALE GENOMIC DNA]</scope>
</reference>
<reference key="3">
    <citation type="journal article" date="2001" name="J. Virol.">
        <title>African swine fever virus multigene family 360 and 530 genes are novel macrophage host range determinants.</title>
        <authorList>
            <person name="Zsak L."/>
            <person name="Lu Z."/>
            <person name="Burrage T.G."/>
            <person name="Neilan J.G."/>
            <person name="Kutish G.F."/>
            <person name="Moore D.M."/>
            <person name="Rock D.L."/>
        </authorList>
    </citation>
    <scope>FUNCTION</scope>
</reference>
<reference key="4">
    <citation type="journal article" date="2020" name="J. Virol.">
        <title>The African Swine Fever Virus Transcriptome.</title>
        <authorList>
            <person name="Cackett G."/>
            <person name="Matelska D."/>
            <person name="Sykora M."/>
            <person name="Portugal R."/>
            <person name="Malecki M."/>
            <person name="Baehler J."/>
            <person name="Dixon L."/>
            <person name="Werner F."/>
        </authorList>
    </citation>
    <scope>INDUCTION</scope>
</reference>
<organismHost>
    <name type="scientific">Ornithodoros</name>
    <name type="common">relapsing fever ticks</name>
    <dbReference type="NCBI Taxonomy" id="6937"/>
</organismHost>
<organismHost>
    <name type="scientific">Sus scrofa</name>
    <name type="common">Pig</name>
    <dbReference type="NCBI Taxonomy" id="9823"/>
</organismHost>
<organism>
    <name type="scientific">African swine fever virus (strain Badajoz 1971 Vero-adapted)</name>
    <name type="common">Ba71V</name>
    <name type="synonym">ASFV</name>
    <dbReference type="NCBI Taxonomy" id="10498"/>
    <lineage>
        <taxon>Viruses</taxon>
        <taxon>Varidnaviria</taxon>
        <taxon>Bamfordvirae</taxon>
        <taxon>Nucleocytoviricota</taxon>
        <taxon>Pokkesviricetes</taxon>
        <taxon>Asfuvirales</taxon>
        <taxon>Asfarviridae</taxon>
        <taxon>Asfivirus</taxon>
        <taxon>African swine fever virus</taxon>
    </lineage>
</organism>
<feature type="chain" id="PRO_0000221947" description="Protein MGF 360-8L">
    <location>
        <begin position="1"/>
        <end position="319"/>
    </location>
</feature>
<protein>
    <recommendedName>
        <fullName>Protein MGF 360-8L</fullName>
    </recommendedName>
</protein>
<comment type="function">
    <text evidence="1">Plays a role in virus cell tropism, and may be required for efficient virus replication in macrophages.</text>
</comment>
<comment type="induction">
    <text evidence="2">Expressed in the early phase of the viral replicative cycle.</text>
</comment>
<comment type="similarity">
    <text evidence="3">Belongs to the asfivirus MGF 360 family.</text>
</comment>
<dbReference type="EMBL" id="M57543">
    <property type="protein sequence ID" value="AAA42676.1"/>
    <property type="molecule type" value="Genomic_DNA"/>
</dbReference>
<dbReference type="EMBL" id="U18466">
    <property type="protein sequence ID" value="AAA65254.1"/>
    <property type="molecule type" value="Genomic_DNA"/>
</dbReference>
<dbReference type="PIR" id="D43680">
    <property type="entry name" value="D43680"/>
</dbReference>
<dbReference type="RefSeq" id="NP_042718.1">
    <property type="nucleotide sequence ID" value="NC_001659.2"/>
</dbReference>
<dbReference type="SMR" id="P23162"/>
<dbReference type="GeneID" id="22220388"/>
<dbReference type="KEGG" id="vg:22220388"/>
<dbReference type="Proteomes" id="UP000000624">
    <property type="component" value="Segment"/>
</dbReference>
<dbReference type="GO" id="GO:0042330">
    <property type="term" value="P:taxis"/>
    <property type="evidence" value="ECO:0007669"/>
    <property type="project" value="InterPro"/>
</dbReference>
<dbReference type="InterPro" id="IPR002595">
    <property type="entry name" value="ASFV_MGF360"/>
</dbReference>
<dbReference type="Pfam" id="PF01671">
    <property type="entry name" value="ASFV_360"/>
    <property type="match status" value="1"/>
</dbReference>
<evidence type="ECO:0000269" key="1">
    <source>
    </source>
</evidence>
<evidence type="ECO:0000269" key="2">
    <source>
    </source>
</evidence>
<evidence type="ECO:0000305" key="3"/>
<sequence>MLSLQTLAKKAVAKQSVPEEYHYILKYCGLWWQNKPISLCHYCNYVILSSTPFKGELLHLDVALIMAIKENNYDVIRLFTEWGANIYYGLTCARTEQTQELCRKLGAKDGLNNKEIFAGLMRHKTSNNIILCHEIFDKNPMLEALNVQEMGEEIHRELKLFIFYILDNVPMNIFVKYWYAIAVKYKLKRAIFFFYQTYGHLSMWRLMCAIYFNNVFDLHEIYEQKIVHMDIDKMMQLACMQDYNFLTIYYCFVLGADIDQAITVTQWHYHTNNLYFCKDLKDLKQNTLTARPLLLPNITDPKKIYTMLKNYLPTSSNSL</sequence>
<keyword id="KW-0244">Early protein</keyword>
<keyword id="KW-1185">Reference proteome</keyword>
<gene>
    <name type="ordered locus">BA71V-023</name>
    <name type="ORF">J319L</name>
</gene>